<evidence type="ECO:0000250" key="1">
    <source>
        <dbReference type="UniProtKB" id="A1ZA55"/>
    </source>
</evidence>
<evidence type="ECO:0000250" key="2">
    <source>
        <dbReference type="UniProtKB" id="Q8N884"/>
    </source>
</evidence>
<evidence type="ECO:0000269" key="3">
    <source>
    </source>
</evidence>
<evidence type="ECO:0000303" key="4">
    <source>
    </source>
</evidence>
<evidence type="ECO:0000305" key="5"/>
<evidence type="ECO:0000312" key="6">
    <source>
        <dbReference type="FlyBase" id="FBgn0050424"/>
    </source>
</evidence>
<gene>
    <name evidence="4 6" type="primary">cGlr2</name>
    <name evidence="6" type="ORF">CG30424</name>
</gene>
<protein>
    <recommendedName>
        <fullName evidence="4">Cyclic GMP-AMP synthase-like receptor 2</fullName>
        <shortName evidence="4">cGLR2</shortName>
        <ecNumber evidence="3">2.7.7.-</ecNumber>
        <ecNumber evidence="3">2.7.7.86</ecNumber>
    </recommendedName>
</protein>
<reference key="1">
    <citation type="journal article" date="2000" name="Science">
        <title>The genome sequence of Drosophila melanogaster.</title>
        <authorList>
            <person name="Adams M.D."/>
            <person name="Celniker S.E."/>
            <person name="Holt R.A."/>
            <person name="Evans C.A."/>
            <person name="Gocayne J.D."/>
            <person name="Amanatides P.G."/>
            <person name="Scherer S.E."/>
            <person name="Li P.W."/>
            <person name="Hoskins R.A."/>
            <person name="Galle R.F."/>
            <person name="George R.A."/>
            <person name="Lewis S.E."/>
            <person name="Richards S."/>
            <person name="Ashburner M."/>
            <person name="Henderson S.N."/>
            <person name="Sutton G.G."/>
            <person name="Wortman J.R."/>
            <person name="Yandell M.D."/>
            <person name="Zhang Q."/>
            <person name="Chen L.X."/>
            <person name="Brandon R.C."/>
            <person name="Rogers Y.-H.C."/>
            <person name="Blazej R.G."/>
            <person name="Champe M."/>
            <person name="Pfeiffer B.D."/>
            <person name="Wan K.H."/>
            <person name="Doyle C."/>
            <person name="Baxter E.G."/>
            <person name="Helt G."/>
            <person name="Nelson C.R."/>
            <person name="Miklos G.L.G."/>
            <person name="Abril J.F."/>
            <person name="Agbayani A."/>
            <person name="An H.-J."/>
            <person name="Andrews-Pfannkoch C."/>
            <person name="Baldwin D."/>
            <person name="Ballew R.M."/>
            <person name="Basu A."/>
            <person name="Baxendale J."/>
            <person name="Bayraktaroglu L."/>
            <person name="Beasley E.M."/>
            <person name="Beeson K.Y."/>
            <person name="Benos P.V."/>
            <person name="Berman B.P."/>
            <person name="Bhandari D."/>
            <person name="Bolshakov S."/>
            <person name="Borkova D."/>
            <person name="Botchan M.R."/>
            <person name="Bouck J."/>
            <person name="Brokstein P."/>
            <person name="Brottier P."/>
            <person name="Burtis K.C."/>
            <person name="Busam D.A."/>
            <person name="Butler H."/>
            <person name="Cadieu E."/>
            <person name="Center A."/>
            <person name="Chandra I."/>
            <person name="Cherry J.M."/>
            <person name="Cawley S."/>
            <person name="Dahlke C."/>
            <person name="Davenport L.B."/>
            <person name="Davies P."/>
            <person name="de Pablos B."/>
            <person name="Delcher A."/>
            <person name="Deng Z."/>
            <person name="Mays A.D."/>
            <person name="Dew I."/>
            <person name="Dietz S.M."/>
            <person name="Dodson K."/>
            <person name="Doup L.E."/>
            <person name="Downes M."/>
            <person name="Dugan-Rocha S."/>
            <person name="Dunkov B.C."/>
            <person name="Dunn P."/>
            <person name="Durbin K.J."/>
            <person name="Evangelista C.C."/>
            <person name="Ferraz C."/>
            <person name="Ferriera S."/>
            <person name="Fleischmann W."/>
            <person name="Fosler C."/>
            <person name="Gabrielian A.E."/>
            <person name="Garg N.S."/>
            <person name="Gelbart W.M."/>
            <person name="Glasser K."/>
            <person name="Glodek A."/>
            <person name="Gong F."/>
            <person name="Gorrell J.H."/>
            <person name="Gu Z."/>
            <person name="Guan P."/>
            <person name="Harris M."/>
            <person name="Harris N.L."/>
            <person name="Harvey D.A."/>
            <person name="Heiman T.J."/>
            <person name="Hernandez J.R."/>
            <person name="Houck J."/>
            <person name="Hostin D."/>
            <person name="Houston K.A."/>
            <person name="Howland T.J."/>
            <person name="Wei M.-H."/>
            <person name="Ibegwam C."/>
            <person name="Jalali M."/>
            <person name="Kalush F."/>
            <person name="Karpen G.H."/>
            <person name="Ke Z."/>
            <person name="Kennison J.A."/>
            <person name="Ketchum K.A."/>
            <person name="Kimmel B.E."/>
            <person name="Kodira C.D."/>
            <person name="Kraft C.L."/>
            <person name="Kravitz S."/>
            <person name="Kulp D."/>
            <person name="Lai Z."/>
            <person name="Lasko P."/>
            <person name="Lei Y."/>
            <person name="Levitsky A.A."/>
            <person name="Li J.H."/>
            <person name="Li Z."/>
            <person name="Liang Y."/>
            <person name="Lin X."/>
            <person name="Liu X."/>
            <person name="Mattei B."/>
            <person name="McIntosh T.C."/>
            <person name="McLeod M.P."/>
            <person name="McPherson D."/>
            <person name="Merkulov G."/>
            <person name="Milshina N.V."/>
            <person name="Mobarry C."/>
            <person name="Morris J."/>
            <person name="Moshrefi A."/>
            <person name="Mount S.M."/>
            <person name="Moy M."/>
            <person name="Murphy B."/>
            <person name="Murphy L."/>
            <person name="Muzny D.M."/>
            <person name="Nelson D.L."/>
            <person name="Nelson D.R."/>
            <person name="Nelson K.A."/>
            <person name="Nixon K."/>
            <person name="Nusskern D.R."/>
            <person name="Pacleb J.M."/>
            <person name="Palazzolo M."/>
            <person name="Pittman G.S."/>
            <person name="Pan S."/>
            <person name="Pollard J."/>
            <person name="Puri V."/>
            <person name="Reese M.G."/>
            <person name="Reinert K."/>
            <person name="Remington K."/>
            <person name="Saunders R.D.C."/>
            <person name="Scheeler F."/>
            <person name="Shen H."/>
            <person name="Shue B.C."/>
            <person name="Siden-Kiamos I."/>
            <person name="Simpson M."/>
            <person name="Skupski M.P."/>
            <person name="Smith T.J."/>
            <person name="Spier E."/>
            <person name="Spradling A.C."/>
            <person name="Stapleton M."/>
            <person name="Strong R."/>
            <person name="Sun E."/>
            <person name="Svirskas R."/>
            <person name="Tector C."/>
            <person name="Turner R."/>
            <person name="Venter E."/>
            <person name="Wang A.H."/>
            <person name="Wang X."/>
            <person name="Wang Z.-Y."/>
            <person name="Wassarman D.A."/>
            <person name="Weinstock G.M."/>
            <person name="Weissenbach J."/>
            <person name="Williams S.M."/>
            <person name="Woodage T."/>
            <person name="Worley K.C."/>
            <person name="Wu D."/>
            <person name="Yang S."/>
            <person name="Yao Q.A."/>
            <person name="Ye J."/>
            <person name="Yeh R.-F."/>
            <person name="Zaveri J.S."/>
            <person name="Zhan M."/>
            <person name="Zhang G."/>
            <person name="Zhao Q."/>
            <person name="Zheng L."/>
            <person name="Zheng X.H."/>
            <person name="Zhong F.N."/>
            <person name="Zhong W."/>
            <person name="Zhou X."/>
            <person name="Zhu S.C."/>
            <person name="Zhu X."/>
            <person name="Smith H.O."/>
            <person name="Gibbs R.A."/>
            <person name="Myers E.W."/>
            <person name="Rubin G.M."/>
            <person name="Venter J.C."/>
        </authorList>
    </citation>
    <scope>NUCLEOTIDE SEQUENCE [LARGE SCALE GENOMIC DNA]</scope>
    <source>
        <strain>Berkeley</strain>
    </source>
</reference>
<reference key="2">
    <citation type="journal article" date="2002" name="Genome Biol.">
        <title>Annotation of the Drosophila melanogaster euchromatic genome: a systematic review.</title>
        <authorList>
            <person name="Misra S."/>
            <person name="Crosby M.A."/>
            <person name="Mungall C.J."/>
            <person name="Matthews B.B."/>
            <person name="Campbell K.S."/>
            <person name="Hradecky P."/>
            <person name="Huang Y."/>
            <person name="Kaminker J.S."/>
            <person name="Millburn G.H."/>
            <person name="Prochnik S.E."/>
            <person name="Smith C.D."/>
            <person name="Tupy J.L."/>
            <person name="Whitfield E.J."/>
            <person name="Bayraktaroglu L."/>
            <person name="Berman B.P."/>
            <person name="Bettencourt B.R."/>
            <person name="Celniker S.E."/>
            <person name="de Grey A.D.N.J."/>
            <person name="Drysdale R.A."/>
            <person name="Harris N.L."/>
            <person name="Richter J."/>
            <person name="Russo S."/>
            <person name="Schroeder A.J."/>
            <person name="Shu S.Q."/>
            <person name="Stapleton M."/>
            <person name="Yamada C."/>
            <person name="Ashburner M."/>
            <person name="Gelbart W.M."/>
            <person name="Rubin G.M."/>
            <person name="Lewis S.E."/>
        </authorList>
    </citation>
    <scope>GENOME REANNOTATION</scope>
    <source>
        <strain>Berkeley</strain>
    </source>
</reference>
<reference key="3">
    <citation type="submission" date="2005-03" db="EMBL/GenBank/DDBJ databases">
        <authorList>
            <person name="Stapleton M."/>
            <person name="Carlson J."/>
            <person name="Chavez C."/>
            <person name="Frise E."/>
            <person name="George R."/>
            <person name="Pacleb J."/>
            <person name="Park S."/>
            <person name="Wan K."/>
            <person name="Yu C."/>
            <person name="Rubin G.M."/>
            <person name="Celniker S."/>
        </authorList>
    </citation>
    <scope>NUCLEOTIDE SEQUENCE [LARGE SCALE MRNA] (ISOFORM B)</scope>
    <source>
        <strain>Berkeley</strain>
        <tissue>Embryo</tissue>
    </source>
</reference>
<reference key="4">
    <citation type="journal article" date="2021" name="Nature">
        <title>Two cGAS-like receptors induce antiviral immunity in Drosophila.</title>
        <authorList>
            <person name="Holleufer A."/>
            <person name="Winther K.G."/>
            <person name="Gad H.H."/>
            <person name="Ai X."/>
            <person name="Chen Y."/>
            <person name="Li L."/>
            <person name="Wei Z."/>
            <person name="Deng H."/>
            <person name="Liu J."/>
            <person name="Frederiksen N.A."/>
            <person name="Simonsen B."/>
            <person name="Andersen L.L."/>
            <person name="Kleigrewe K."/>
            <person name="Dalskov L."/>
            <person name="Pichlmair A."/>
            <person name="Cai H."/>
            <person name="Imler J.L."/>
            <person name="Hartmann R."/>
        </authorList>
    </citation>
    <scope>FUNCTION</scope>
    <scope>CATALYTIC ACTIVITY</scope>
    <scope>MUTAGENESIS OF 79-GLU--ASP-81; LYS-256; ARG-267 AND ARG-271</scope>
</reference>
<dbReference type="EC" id="2.7.7.-" evidence="3"/>
<dbReference type="EC" id="2.7.7.86" evidence="3"/>
<dbReference type="EMBL" id="AE013599">
    <property type="protein sequence ID" value="ABV53906.1"/>
    <property type="molecule type" value="Genomic_DNA"/>
</dbReference>
<dbReference type="EMBL" id="AE013599">
    <property type="protein sequence ID" value="ABV53907.1"/>
    <property type="molecule type" value="Genomic_DNA"/>
</dbReference>
<dbReference type="EMBL" id="AE013599">
    <property type="protein sequence ID" value="AHN56662.1"/>
    <property type="molecule type" value="Genomic_DNA"/>
</dbReference>
<dbReference type="EMBL" id="AE013599">
    <property type="protein sequence ID" value="ABV53908.1"/>
    <property type="status" value="ALT_SEQ"/>
    <property type="molecule type" value="Genomic_DNA"/>
</dbReference>
<dbReference type="EMBL" id="BT021248">
    <property type="protein sequence ID" value="AAX33396.1"/>
    <property type="molecule type" value="mRNA"/>
</dbReference>
<dbReference type="RefSeq" id="NP_001097453.1">
    <molecule id="A8DYP7-4"/>
    <property type="nucleotide sequence ID" value="NM_001103983.2"/>
</dbReference>
<dbReference type="RefSeq" id="NP_001097454.1">
    <molecule id="A8DYP7-3"/>
    <property type="nucleotide sequence ID" value="NM_001103984.2"/>
</dbReference>
<dbReference type="RefSeq" id="NP_001097455.1">
    <property type="nucleotide sequence ID" value="NM_001103985.2"/>
</dbReference>
<dbReference type="RefSeq" id="NP_001286867.1">
    <molecule id="A8DYP7-2"/>
    <property type="nucleotide sequence ID" value="NM_001299938.1"/>
</dbReference>
<dbReference type="SMR" id="A8DYP7"/>
<dbReference type="FunCoup" id="A8DYP7">
    <property type="interactions" value="3"/>
</dbReference>
<dbReference type="STRING" id="7227.FBpp0112289"/>
<dbReference type="PaxDb" id="7227-FBpp0112289"/>
<dbReference type="DNASU" id="246606"/>
<dbReference type="EnsemblMetazoa" id="FBtr0113375">
    <molecule id="A8DYP7-4"/>
    <property type="protein sequence ID" value="FBpp0112287"/>
    <property type="gene ID" value="FBgn0050424"/>
</dbReference>
<dbReference type="EnsemblMetazoa" id="FBtr0113376">
    <molecule id="A8DYP7-3"/>
    <property type="protein sequence ID" value="FBpp0112288"/>
    <property type="gene ID" value="FBgn0050424"/>
</dbReference>
<dbReference type="EnsemblMetazoa" id="FBtr0113377">
    <property type="protein sequence ID" value="FBpp0112289"/>
    <property type="gene ID" value="FBgn0050424"/>
</dbReference>
<dbReference type="EnsemblMetazoa" id="FBtr0343511">
    <molecule id="A8DYP7-2"/>
    <property type="protein sequence ID" value="FBpp0310116"/>
    <property type="gene ID" value="FBgn0050424"/>
</dbReference>
<dbReference type="GeneID" id="246606"/>
<dbReference type="KEGG" id="dme:Dmel_CG30424"/>
<dbReference type="UCSC" id="CG30424-RB">
    <property type="organism name" value="d. melanogaster"/>
</dbReference>
<dbReference type="UCSC" id="CG30424-RC">
    <property type="organism name" value="d. melanogaster"/>
</dbReference>
<dbReference type="UCSC" id="CG30424-RD">
    <molecule id="A8DYP7-1"/>
    <property type="organism name" value="d. melanogaster"/>
</dbReference>
<dbReference type="AGR" id="FB:FBgn0050424"/>
<dbReference type="CTD" id="246606"/>
<dbReference type="FlyBase" id="FBgn0050424">
    <property type="gene designation" value="cGlr2"/>
</dbReference>
<dbReference type="VEuPathDB" id="VectorBase:FBgn0050424"/>
<dbReference type="eggNOG" id="ENOG502S61H">
    <property type="taxonomic scope" value="Eukaryota"/>
</dbReference>
<dbReference type="GeneTree" id="ENSGT01050000244827"/>
<dbReference type="HOGENOM" id="CLU_034978_1_0_1"/>
<dbReference type="InParanoid" id="A8DYP7"/>
<dbReference type="OrthoDB" id="7249367at2759"/>
<dbReference type="PhylomeDB" id="A8DYP7"/>
<dbReference type="BioGRID-ORCS" id="246606">
    <property type="hits" value="0 hits in 1 CRISPR screen"/>
</dbReference>
<dbReference type="GenomeRNAi" id="246606"/>
<dbReference type="PRO" id="PR:A8DYP7"/>
<dbReference type="Proteomes" id="UP000000803">
    <property type="component" value="Chromosome 2R"/>
</dbReference>
<dbReference type="Bgee" id="FBgn0050424">
    <property type="expression patterns" value="Expressed in adult differentiating enterocyte in digestive tract and 90 other cell types or tissues"/>
</dbReference>
<dbReference type="ExpressionAtlas" id="A8DYP7">
    <property type="expression patterns" value="baseline and differential"/>
</dbReference>
<dbReference type="GO" id="GO:0005829">
    <property type="term" value="C:cytosol"/>
    <property type="evidence" value="ECO:0000305"/>
    <property type="project" value="FlyBase"/>
</dbReference>
<dbReference type="GO" id="GO:0061501">
    <property type="term" value="F:2',3'-cyclic GMP-AMP synthase activity"/>
    <property type="evidence" value="ECO:0000314"/>
    <property type="project" value="FlyBase"/>
</dbReference>
<dbReference type="GO" id="GO:0140700">
    <property type="term" value="F:3',2'-cyclic GMP-AMP synthase activity"/>
    <property type="evidence" value="ECO:0000314"/>
    <property type="project" value="UniProtKB"/>
</dbReference>
<dbReference type="GO" id="GO:0005524">
    <property type="term" value="F:ATP binding"/>
    <property type="evidence" value="ECO:0007669"/>
    <property type="project" value="UniProtKB-KW"/>
</dbReference>
<dbReference type="GO" id="GO:0003725">
    <property type="term" value="F:double-stranded RNA binding"/>
    <property type="evidence" value="ECO:0000314"/>
    <property type="project" value="FlyBase"/>
</dbReference>
<dbReference type="GO" id="GO:0005525">
    <property type="term" value="F:GTP binding"/>
    <property type="evidence" value="ECO:0007669"/>
    <property type="project" value="UniProtKB-KW"/>
</dbReference>
<dbReference type="GO" id="GO:0046872">
    <property type="term" value="F:metal ion binding"/>
    <property type="evidence" value="ECO:0007669"/>
    <property type="project" value="UniProtKB-KW"/>
</dbReference>
<dbReference type="GO" id="GO:0098586">
    <property type="term" value="P:cellular response to virus"/>
    <property type="evidence" value="ECO:0000314"/>
    <property type="project" value="FlyBase"/>
</dbReference>
<dbReference type="GO" id="GO:0140896">
    <property type="term" value="P:cGAS/STING signaling pathway"/>
    <property type="evidence" value="ECO:0000314"/>
    <property type="project" value="FlyBase"/>
</dbReference>
<dbReference type="GO" id="GO:0051607">
    <property type="term" value="P:defense response to virus"/>
    <property type="evidence" value="ECO:0000314"/>
    <property type="project" value="UniProt"/>
</dbReference>
<dbReference type="GO" id="GO:1902615">
    <property type="term" value="P:immune response involved in response to exogenous dsRNA"/>
    <property type="evidence" value="ECO:0000315"/>
    <property type="project" value="FlyBase"/>
</dbReference>
<dbReference type="GO" id="GO:0045087">
    <property type="term" value="P:innate immune response"/>
    <property type="evidence" value="ECO:0007669"/>
    <property type="project" value="UniProtKB-KW"/>
</dbReference>
<dbReference type="Gene3D" id="1.10.1410.40">
    <property type="match status" value="1"/>
</dbReference>
<dbReference type="Gene3D" id="3.30.460.90">
    <property type="match status" value="1"/>
</dbReference>
<dbReference type="InterPro" id="IPR046903">
    <property type="entry name" value="Mab-21-like_nuc_Trfase"/>
</dbReference>
<dbReference type="InterPro" id="IPR046906">
    <property type="entry name" value="Mab-21_HhH/H2TH-like"/>
</dbReference>
<dbReference type="InterPro" id="IPR024810">
    <property type="entry name" value="MAB21L/cGLR"/>
</dbReference>
<dbReference type="PANTHER" id="PTHR10656">
    <property type="entry name" value="CELL FATE DETERMINING PROTEIN MAB21-RELATED"/>
    <property type="match status" value="1"/>
</dbReference>
<dbReference type="PANTHER" id="PTHR10656:SF42">
    <property type="entry name" value="CYCLIC GMP-AMP SYNTHASE-LIKE PROTEIN-RELATED"/>
    <property type="match status" value="1"/>
</dbReference>
<dbReference type="Pfam" id="PF03281">
    <property type="entry name" value="Mab-21"/>
    <property type="match status" value="1"/>
</dbReference>
<dbReference type="Pfam" id="PF20266">
    <property type="entry name" value="Mab-21_C"/>
    <property type="match status" value="1"/>
</dbReference>
<dbReference type="SMART" id="SM01265">
    <property type="entry name" value="Mab-21"/>
    <property type="match status" value="1"/>
</dbReference>
<feature type="chain" id="PRO_0000454442" description="Cyclic GMP-AMP synthase-like receptor 2">
    <location>
        <begin position="1"/>
        <end position="459"/>
    </location>
</feature>
<feature type="binding site" evidence="2">
    <location>
        <position position="68"/>
    </location>
    <ligand>
        <name>ATP</name>
        <dbReference type="ChEBI" id="CHEBI:30616"/>
    </ligand>
</feature>
<feature type="binding site" evidence="2">
    <location>
        <begin position="79"/>
        <end position="81"/>
    </location>
    <ligand>
        <name>ATP</name>
        <dbReference type="ChEBI" id="CHEBI:30616"/>
    </ligand>
</feature>
<feature type="binding site" evidence="2">
    <location>
        <position position="79"/>
    </location>
    <ligand>
        <name>Mg(2+)</name>
        <dbReference type="ChEBI" id="CHEBI:18420"/>
        <note>catalytic</note>
    </ligand>
</feature>
<feature type="binding site" evidence="2">
    <location>
        <position position="81"/>
    </location>
    <ligand>
        <name>Mg(2+)</name>
        <dbReference type="ChEBI" id="CHEBI:18420"/>
        <note>catalytic</note>
    </ligand>
</feature>
<feature type="binding site" evidence="2">
    <location>
        <position position="199"/>
    </location>
    <ligand>
        <name>GTP</name>
        <dbReference type="ChEBI" id="CHEBI:37565"/>
    </ligand>
</feature>
<feature type="binding site" evidence="2">
    <location>
        <position position="199"/>
    </location>
    <ligand>
        <name>Mg(2+)</name>
        <dbReference type="ChEBI" id="CHEBI:18420"/>
        <note>catalytic</note>
    </ligand>
</feature>
<feature type="binding site" evidence="2">
    <location>
        <begin position="248"/>
        <end position="255"/>
    </location>
    <ligand>
        <name>GTP</name>
        <dbReference type="ChEBI" id="CHEBI:37565"/>
    </ligand>
</feature>
<feature type="binding site" evidence="2">
    <location>
        <begin position="252"/>
        <end position="255"/>
    </location>
    <ligand>
        <name>ATP</name>
        <dbReference type="ChEBI" id="CHEBI:30616"/>
    </ligand>
</feature>
<feature type="binding site" evidence="2">
    <location>
        <position position="263"/>
    </location>
    <ligand>
        <name>Zn(2+)</name>
        <dbReference type="ChEBI" id="CHEBI:29105"/>
    </ligand>
</feature>
<feature type="binding site" evidence="2">
    <location>
        <position position="274"/>
    </location>
    <ligand>
        <name>ATP</name>
        <dbReference type="ChEBI" id="CHEBI:30616"/>
    </ligand>
</feature>
<feature type="binding site" evidence="2">
    <location>
        <begin position="288"/>
        <end position="292"/>
    </location>
    <ligand>
        <name>ATP</name>
        <dbReference type="ChEBI" id="CHEBI:30616"/>
    </ligand>
</feature>
<feature type="splice variant" id="VSP_061341" description="In isoform C.">
    <location>
        <begin position="1"/>
        <end position="317"/>
    </location>
</feature>
<feature type="splice variant" id="VSP_061342" description="In isoform B.">
    <original>MKESRNLENFVEKKLYECKKKYVDIPKDEGQRYGGKHYEALTSKIFEILRKENPELDIIIAEFSLEGSVGMLKIAKPNEFDLVFKLKFPYYKSIAVTRDPKIPGNVLLDMTRVLELLKDDPREDFQRIRELIQGRLVDAQNFFVVDRLRSWLQSLFSQALNRISYRVELVAGVVSHLKYRTCGPAHTIYVYGDYEYSVDYVPAICLAAEQNVLPTKQLECFKRANTSYWEAIPKPLKPLTETSMISFRSSFYAVEKILLQDVHENCRNAIRFMKKFRDVKTNLGNCKSYYIKTLFLWKIIQ</original>
    <variation>MNAKRSMLTFQRTRDNDM</variation>
    <location>
        <begin position="1"/>
        <end position="301"/>
    </location>
</feature>
<feature type="splice variant" id="VSP_061343" description="In isoform E.">
    <original>MKESRNLENFVEKKLYECKKKYVDIPKDEGQRYGGKHYEALTSKIFEILRKENPELDIIIAEFSLEGSVGMLKIAKPNEFDLVFKLKFPYYKSIAVTRDPKIPGNVLLDMTRVLELLKDDPREDFQRIRELIQGRLVDAQNFFVVDRLRSWLQSLFSQALNRISYRVELVAGVVSHLKYRTCGPAHTIYVYGDYEYSVDYVPAICLAAEQNVLPTKQLECFKRANTSYWEAIPKPLKPLTETSMISFRSSFYAVEKILLQDVHENCRNAIRFMKKFRDVKTNLGNCKSYYIKTLFLWKIIQ</original>
    <variation>MNAKRSMLTFQRTRDNDMSWTSLLLSSVWK</variation>
    <location>
        <begin position="1"/>
        <end position="301"/>
    </location>
</feature>
<feature type="mutagenesis site" description="Abolished nucleotidyltransferase activity." evidence="3">
    <original>EFD</original>
    <variation>AFA</variation>
    <location>
        <begin position="79"/>
        <end position="81"/>
    </location>
</feature>
<feature type="mutagenesis site" description="Abolished binding to nucleic acid activator, leading to impaired antiviral immunity; when associated with E-267 or E-271." evidence="3">
    <original>K</original>
    <variation>E</variation>
    <location>
        <position position="256"/>
    </location>
</feature>
<feature type="mutagenesis site" description="Abolished binding to nucleic acid activator, leading to impaired antiviral immunity; when associated with E-256." evidence="3">
    <original>R</original>
    <variation>E</variation>
    <location>
        <position position="267"/>
    </location>
</feature>
<feature type="mutagenesis site" description="Abolished binding to nucleic acid activator, leading to impaired antiviral immunity; when associated with E-256." evidence="3">
    <original>R</original>
    <variation>E</variation>
    <location>
        <position position="271"/>
    </location>
</feature>
<keyword id="KW-0025">Alternative splicing</keyword>
<keyword id="KW-0051">Antiviral defense</keyword>
<keyword id="KW-0067">ATP-binding</keyword>
<keyword id="KW-0342">GTP-binding</keyword>
<keyword id="KW-0391">Immunity</keyword>
<keyword id="KW-0399">Innate immunity</keyword>
<keyword id="KW-0460">Magnesium</keyword>
<keyword id="KW-0464">Manganese</keyword>
<keyword id="KW-0479">Metal-binding</keyword>
<keyword id="KW-0547">Nucleotide-binding</keyword>
<keyword id="KW-0548">Nucleotidyltransferase</keyword>
<keyword id="KW-1185">Reference proteome</keyword>
<keyword id="KW-0694">RNA-binding</keyword>
<keyword id="KW-0808">Transferase</keyword>
<keyword id="KW-0862">Zinc</keyword>
<comment type="function">
    <text evidence="3">Nucleotidyltransferase that catalyzes the formation of cyclic GMP-AMP from ATP and GTP and plays a key role in antiviral innate immunity (PubMed:34261128). Directly binds some unknown nucleic acid, activating the nucleotidyltransferase activity, leading to synthesis of both 3',2'-cGAMP and 2',3'-cGAMP second messengers (PubMed:34261128). 3',2'-cGAMP and 2',3'-cGAMP bind to and activate Sting, thereby triggering the antiviral immune response via activation of the NF-kappa-B transcription factor Rel (Relish) (PubMed:34261128).</text>
</comment>
<comment type="catalytic activity">
    <reaction evidence="3">
        <text>GTP + ATP = 3',2'-cGAMP + 2 diphosphate</text>
        <dbReference type="Rhea" id="RHEA:68344"/>
        <dbReference type="ChEBI" id="CHEBI:30616"/>
        <dbReference type="ChEBI" id="CHEBI:33019"/>
        <dbReference type="ChEBI" id="CHEBI:37565"/>
        <dbReference type="ChEBI" id="CHEBI:177334"/>
    </reaction>
    <physiologicalReaction direction="left-to-right" evidence="3">
        <dbReference type="Rhea" id="RHEA:68345"/>
    </physiologicalReaction>
</comment>
<comment type="catalytic activity">
    <reaction evidence="3">
        <text>GTP + ATP = 2',3'-cGAMP + 2 diphosphate</text>
        <dbReference type="Rhea" id="RHEA:42064"/>
        <dbReference type="ChEBI" id="CHEBI:30616"/>
        <dbReference type="ChEBI" id="CHEBI:33019"/>
        <dbReference type="ChEBI" id="CHEBI:37565"/>
        <dbReference type="ChEBI" id="CHEBI:143093"/>
        <dbReference type="EC" id="2.7.7.86"/>
    </reaction>
    <physiologicalReaction direction="left-to-right" evidence="3">
        <dbReference type="Rhea" id="RHEA:42065"/>
    </physiologicalReaction>
</comment>
<comment type="catalytic activity">
    <reaction evidence="3">
        <text>GTP + ATP = pppGp(2'-5')A + diphosphate</text>
        <dbReference type="Rhea" id="RHEA:23748"/>
        <dbReference type="ChEBI" id="CHEBI:30616"/>
        <dbReference type="ChEBI" id="CHEBI:33019"/>
        <dbReference type="ChEBI" id="CHEBI:37565"/>
        <dbReference type="ChEBI" id="CHEBI:78318"/>
    </reaction>
    <physiologicalReaction direction="left-to-right" evidence="3">
        <dbReference type="Rhea" id="RHEA:23749"/>
    </physiologicalReaction>
</comment>
<comment type="catalytic activity">
    <reaction evidence="3">
        <text>pppA(2'-5')pG = 3',2'-cGAMP + diphosphate</text>
        <dbReference type="Rhea" id="RHEA:68352"/>
        <dbReference type="ChEBI" id="CHEBI:33019"/>
        <dbReference type="ChEBI" id="CHEBI:177334"/>
        <dbReference type="ChEBI" id="CHEBI:177335"/>
    </reaction>
</comment>
<comment type="catalytic activity">
    <reaction evidence="3">
        <text>pppGp(2'-5')A = 2',3'-cGAMP + diphosphate</text>
        <dbReference type="Rhea" id="RHEA:23924"/>
        <dbReference type="ChEBI" id="CHEBI:33019"/>
        <dbReference type="ChEBI" id="CHEBI:78318"/>
        <dbReference type="ChEBI" id="CHEBI:143093"/>
    </reaction>
    <physiologicalReaction direction="left-to-right" evidence="3">
        <dbReference type="Rhea" id="RHEA:23925"/>
    </physiologicalReaction>
</comment>
<comment type="cofactor">
    <cofactor evidence="1">
        <name>Mg(2+)</name>
        <dbReference type="ChEBI" id="CHEBI:18420"/>
    </cofactor>
    <cofactor evidence="1">
        <name>Mn(2+)</name>
        <dbReference type="ChEBI" id="CHEBI:29035"/>
    </cofactor>
</comment>
<comment type="activity regulation">
    <text evidence="3">The enzyme activity is specifically activated by some nucleic acid.</text>
</comment>
<comment type="alternative products">
    <event type="alternative splicing"/>
    <isoform>
        <id>A8DYP7-1</id>
        <name>D</name>
        <sequence type="displayed"/>
    </isoform>
    <isoform>
        <id>A8DYP7-2</id>
        <name>E</name>
        <sequence type="described" ref="VSP_061343"/>
    </isoform>
    <isoform>
        <id>A8DYP7-3</id>
        <name>C</name>
        <sequence type="described" ref="VSP_061341"/>
    </isoform>
    <isoform>
        <id>A8DYP7-4</id>
        <name>B</name>
        <sequence type="described" ref="VSP_061342"/>
    </isoform>
</comment>
<comment type="similarity">
    <text evidence="5">Belongs to the mab-21 family.</text>
</comment>
<comment type="sequence caution" evidence="5">
    <conflict type="erroneous gene model prediction">
        <sequence resource="EMBL-CDS" id="ABV53908"/>
    </conflict>
</comment>
<sequence>MKESRNLENFVEKKLYECKKKYVDIPKDEGQRYGGKHYEALTSKIFEILRKENPELDIIIAEFSLEGSVGMLKIAKPNEFDLVFKLKFPYYKSIAVTRDPKIPGNVLLDMTRVLELLKDDPREDFQRIRELIQGRLVDAQNFFVVDRLRSWLQSLFSQALNRISYRVELVAGVVSHLKYRTCGPAHTIYVYGDYEYSVDYVPAICLAAEQNVLPTKQLECFKRANTSYWEAIPKPLKPLTETSMISFRSSFYAVEKILLQDVHENCRNAIRFMKKFRDVKTNLGNCKSYYIKTLFLWKIIQEPESYWLNPLSFILADMFDDLAENLRRGVITFFWDPELNMIDALTRDQVWEMYLCVQRIPRDLRGAEISRNKWSFFVLREFSHKKERNVNLKCSSRRKRNVIKGLKTTSICKLRNARTNGTWTAGLWTRPGHAYRGPSETVSTWDTVKDAAWSEGIVE</sequence>
<accession>A8DYP7</accession>
<accession>A0A0B4LGP4</accession>
<accession>A8DYP8</accession>
<accession>Q5BIH6</accession>
<name>CGLR2_DROME</name>
<proteinExistence type="evidence at protein level"/>
<organism>
    <name type="scientific">Drosophila melanogaster</name>
    <name type="common">Fruit fly</name>
    <dbReference type="NCBI Taxonomy" id="7227"/>
    <lineage>
        <taxon>Eukaryota</taxon>
        <taxon>Metazoa</taxon>
        <taxon>Ecdysozoa</taxon>
        <taxon>Arthropoda</taxon>
        <taxon>Hexapoda</taxon>
        <taxon>Insecta</taxon>
        <taxon>Pterygota</taxon>
        <taxon>Neoptera</taxon>
        <taxon>Endopterygota</taxon>
        <taxon>Diptera</taxon>
        <taxon>Brachycera</taxon>
        <taxon>Muscomorpha</taxon>
        <taxon>Ephydroidea</taxon>
        <taxon>Drosophilidae</taxon>
        <taxon>Drosophila</taxon>
        <taxon>Sophophora</taxon>
    </lineage>
</organism>